<dbReference type="EC" id="6.3.3.1" evidence="1"/>
<dbReference type="EMBL" id="CP001393">
    <property type="protein sequence ID" value="ACM60545.1"/>
    <property type="molecule type" value="Genomic_DNA"/>
</dbReference>
<dbReference type="RefSeq" id="WP_015907907.1">
    <property type="nucleotide sequence ID" value="NC_012034.1"/>
</dbReference>
<dbReference type="SMR" id="B9MS91"/>
<dbReference type="STRING" id="521460.Athe_1447"/>
<dbReference type="GeneID" id="31772792"/>
<dbReference type="KEGG" id="ate:Athe_1447"/>
<dbReference type="eggNOG" id="COG0150">
    <property type="taxonomic scope" value="Bacteria"/>
</dbReference>
<dbReference type="HOGENOM" id="CLU_047116_0_0_9"/>
<dbReference type="UniPathway" id="UPA00074">
    <property type="reaction ID" value="UER00129"/>
</dbReference>
<dbReference type="Proteomes" id="UP000007723">
    <property type="component" value="Chromosome"/>
</dbReference>
<dbReference type="GO" id="GO:0005829">
    <property type="term" value="C:cytosol"/>
    <property type="evidence" value="ECO:0007669"/>
    <property type="project" value="TreeGrafter"/>
</dbReference>
<dbReference type="GO" id="GO:0005524">
    <property type="term" value="F:ATP binding"/>
    <property type="evidence" value="ECO:0007669"/>
    <property type="project" value="UniProtKB-KW"/>
</dbReference>
<dbReference type="GO" id="GO:0004637">
    <property type="term" value="F:phosphoribosylamine-glycine ligase activity"/>
    <property type="evidence" value="ECO:0007669"/>
    <property type="project" value="TreeGrafter"/>
</dbReference>
<dbReference type="GO" id="GO:0004641">
    <property type="term" value="F:phosphoribosylformylglycinamidine cyclo-ligase activity"/>
    <property type="evidence" value="ECO:0007669"/>
    <property type="project" value="UniProtKB-UniRule"/>
</dbReference>
<dbReference type="GO" id="GO:0006189">
    <property type="term" value="P:'de novo' IMP biosynthetic process"/>
    <property type="evidence" value="ECO:0007669"/>
    <property type="project" value="UniProtKB-UniRule"/>
</dbReference>
<dbReference type="GO" id="GO:0046084">
    <property type="term" value="P:adenine biosynthetic process"/>
    <property type="evidence" value="ECO:0007669"/>
    <property type="project" value="TreeGrafter"/>
</dbReference>
<dbReference type="CDD" id="cd02196">
    <property type="entry name" value="PurM"/>
    <property type="match status" value="1"/>
</dbReference>
<dbReference type="FunFam" id="3.30.1330.10:FF:000001">
    <property type="entry name" value="Phosphoribosylformylglycinamidine cyclo-ligase"/>
    <property type="match status" value="1"/>
</dbReference>
<dbReference type="FunFam" id="3.90.650.10:FF:000001">
    <property type="entry name" value="Phosphoribosylformylglycinamidine cyclo-ligase"/>
    <property type="match status" value="1"/>
</dbReference>
<dbReference type="Gene3D" id="3.90.650.10">
    <property type="entry name" value="PurM-like C-terminal domain"/>
    <property type="match status" value="1"/>
</dbReference>
<dbReference type="Gene3D" id="3.30.1330.10">
    <property type="entry name" value="PurM-like, N-terminal domain"/>
    <property type="match status" value="1"/>
</dbReference>
<dbReference type="HAMAP" id="MF_00741">
    <property type="entry name" value="AIRS"/>
    <property type="match status" value="1"/>
</dbReference>
<dbReference type="InterPro" id="IPR010918">
    <property type="entry name" value="PurM-like_C_dom"/>
</dbReference>
<dbReference type="InterPro" id="IPR036676">
    <property type="entry name" value="PurM-like_C_sf"/>
</dbReference>
<dbReference type="InterPro" id="IPR016188">
    <property type="entry name" value="PurM-like_N"/>
</dbReference>
<dbReference type="InterPro" id="IPR036921">
    <property type="entry name" value="PurM-like_N_sf"/>
</dbReference>
<dbReference type="InterPro" id="IPR004733">
    <property type="entry name" value="PurM_cligase"/>
</dbReference>
<dbReference type="NCBIfam" id="TIGR00878">
    <property type="entry name" value="purM"/>
    <property type="match status" value="1"/>
</dbReference>
<dbReference type="PANTHER" id="PTHR10520:SF12">
    <property type="entry name" value="TRIFUNCTIONAL PURINE BIOSYNTHETIC PROTEIN ADENOSINE-3"/>
    <property type="match status" value="1"/>
</dbReference>
<dbReference type="PANTHER" id="PTHR10520">
    <property type="entry name" value="TRIFUNCTIONAL PURINE BIOSYNTHETIC PROTEIN ADENOSINE-3-RELATED"/>
    <property type="match status" value="1"/>
</dbReference>
<dbReference type="Pfam" id="PF00586">
    <property type="entry name" value="AIRS"/>
    <property type="match status" value="1"/>
</dbReference>
<dbReference type="Pfam" id="PF02769">
    <property type="entry name" value="AIRS_C"/>
    <property type="match status" value="1"/>
</dbReference>
<dbReference type="SUPFAM" id="SSF56042">
    <property type="entry name" value="PurM C-terminal domain-like"/>
    <property type="match status" value="1"/>
</dbReference>
<dbReference type="SUPFAM" id="SSF55326">
    <property type="entry name" value="PurM N-terminal domain-like"/>
    <property type="match status" value="1"/>
</dbReference>
<protein>
    <recommendedName>
        <fullName evidence="1">Phosphoribosylformylglycinamidine cyclo-ligase</fullName>
        <ecNumber evidence="1">6.3.3.1</ecNumber>
    </recommendedName>
    <alternativeName>
        <fullName evidence="1">AIR synthase</fullName>
    </alternativeName>
    <alternativeName>
        <fullName evidence="1">AIRS</fullName>
    </alternativeName>
    <alternativeName>
        <fullName evidence="1">Phosphoribosyl-aminoimidazole synthetase</fullName>
    </alternativeName>
</protein>
<reference key="1">
    <citation type="submission" date="2009-01" db="EMBL/GenBank/DDBJ databases">
        <title>Complete sequence of chromosome of Caldicellulosiruptor becscii DSM 6725.</title>
        <authorList>
            <person name="Lucas S."/>
            <person name="Copeland A."/>
            <person name="Lapidus A."/>
            <person name="Glavina del Rio T."/>
            <person name="Tice H."/>
            <person name="Bruce D."/>
            <person name="Goodwin L."/>
            <person name="Pitluck S."/>
            <person name="Sims D."/>
            <person name="Meincke L."/>
            <person name="Brettin T."/>
            <person name="Detter J.C."/>
            <person name="Han C."/>
            <person name="Larimer F."/>
            <person name="Land M."/>
            <person name="Hauser L."/>
            <person name="Kyrpides N."/>
            <person name="Ovchinnikova G."/>
            <person name="Kataeva I."/>
            <person name="Adams M.W.W."/>
        </authorList>
    </citation>
    <scope>NUCLEOTIDE SEQUENCE [LARGE SCALE GENOMIC DNA]</scope>
    <source>
        <strain>ATCC BAA-1888 / DSM 6725 / KCTC 15123 / Z-1320</strain>
    </source>
</reference>
<name>PUR5_CALBD</name>
<comment type="catalytic activity">
    <reaction evidence="1">
        <text>2-formamido-N(1)-(5-O-phospho-beta-D-ribosyl)acetamidine + ATP = 5-amino-1-(5-phospho-beta-D-ribosyl)imidazole + ADP + phosphate + H(+)</text>
        <dbReference type="Rhea" id="RHEA:23032"/>
        <dbReference type="ChEBI" id="CHEBI:15378"/>
        <dbReference type="ChEBI" id="CHEBI:30616"/>
        <dbReference type="ChEBI" id="CHEBI:43474"/>
        <dbReference type="ChEBI" id="CHEBI:137981"/>
        <dbReference type="ChEBI" id="CHEBI:147287"/>
        <dbReference type="ChEBI" id="CHEBI:456216"/>
        <dbReference type="EC" id="6.3.3.1"/>
    </reaction>
</comment>
<comment type="pathway">
    <text evidence="1">Purine metabolism; IMP biosynthesis via de novo pathway; 5-amino-1-(5-phospho-D-ribosyl)imidazole from N(2)-formyl-N(1)-(5-phospho-D-ribosyl)glycinamide: step 2/2.</text>
</comment>
<comment type="subcellular location">
    <subcellularLocation>
        <location evidence="1">Cytoplasm</location>
    </subcellularLocation>
</comment>
<comment type="similarity">
    <text evidence="1">Belongs to the AIR synthase family.</text>
</comment>
<evidence type="ECO:0000255" key="1">
    <source>
        <dbReference type="HAMAP-Rule" id="MF_00741"/>
    </source>
</evidence>
<accession>B9MS91</accession>
<gene>
    <name evidence="1" type="primary">purM</name>
    <name type="ordered locus">Athe_1447</name>
</gene>
<sequence length="341" mass="37201">MTTYKDAGVNIEEGYKAVNLIKSLARETFDSNVITDIGSFGSMYLLNIGNSEYILVSGTDGVGTKLKIAFYLDKHDTVGIDCVAMCVNDILCHGAKPLFFLDYIACGKLNSSKVANIVKGIAEGCKMAGCSLVGGETAEMPGFYKEDEYDLAGFVVGIVERQKAVCGKDVNTGDVLIGLASSGVHSNGYSLVRKVFGIDDNPKVLEKIYEELGLSLGEELLKPTRIYVKPVLKVLERVNVKGIAHITGGGFFENIPRAFPKGYFAIIEKGSWEVPAIFRLIQEYGKVEEREMFSTFNMGIGMVLIVSEEDVDLTMKILEQEKVNAWVIGTIQKGEDGVVLK</sequence>
<proteinExistence type="inferred from homology"/>
<organism>
    <name type="scientific">Caldicellulosiruptor bescii (strain ATCC BAA-1888 / DSM 6725 / KCTC 15123 / Z-1320)</name>
    <name type="common">Anaerocellum thermophilum</name>
    <dbReference type="NCBI Taxonomy" id="521460"/>
    <lineage>
        <taxon>Bacteria</taxon>
        <taxon>Bacillati</taxon>
        <taxon>Bacillota</taxon>
        <taxon>Bacillota incertae sedis</taxon>
        <taxon>Caldicellulosiruptorales</taxon>
        <taxon>Caldicellulosiruptoraceae</taxon>
        <taxon>Caldicellulosiruptor</taxon>
    </lineage>
</organism>
<feature type="chain" id="PRO_1000148263" description="Phosphoribosylformylglycinamidine cyclo-ligase">
    <location>
        <begin position="1"/>
        <end position="341"/>
    </location>
</feature>
<keyword id="KW-0067">ATP-binding</keyword>
<keyword id="KW-0963">Cytoplasm</keyword>
<keyword id="KW-0436">Ligase</keyword>
<keyword id="KW-0547">Nucleotide-binding</keyword>
<keyword id="KW-0658">Purine biosynthesis</keyword>